<organism>
    <name type="scientific">Streptococcus pyogenes serotype M1</name>
    <dbReference type="NCBI Taxonomy" id="301447"/>
    <lineage>
        <taxon>Bacteria</taxon>
        <taxon>Bacillati</taxon>
        <taxon>Bacillota</taxon>
        <taxon>Bacilli</taxon>
        <taxon>Lactobacillales</taxon>
        <taxon>Streptococcaceae</taxon>
        <taxon>Streptococcus</taxon>
    </lineage>
</organism>
<keyword id="KW-0131">Cell cycle</keyword>
<keyword id="KW-0132">Cell division</keyword>
<keyword id="KW-0133">Cell shape</keyword>
<keyword id="KW-0961">Cell wall biogenesis/degradation</keyword>
<keyword id="KW-0963">Cytoplasm</keyword>
<keyword id="KW-0274">FAD</keyword>
<keyword id="KW-0285">Flavoprotein</keyword>
<keyword id="KW-0521">NADP</keyword>
<keyword id="KW-0560">Oxidoreductase</keyword>
<keyword id="KW-0573">Peptidoglycan synthesis</keyword>
<keyword id="KW-1185">Reference proteome</keyword>
<comment type="function">
    <text evidence="1">Cell wall formation.</text>
</comment>
<comment type="catalytic activity">
    <reaction evidence="1">
        <text>UDP-N-acetyl-alpha-D-muramate + NADP(+) = UDP-N-acetyl-3-O-(1-carboxyvinyl)-alpha-D-glucosamine + NADPH + H(+)</text>
        <dbReference type="Rhea" id="RHEA:12248"/>
        <dbReference type="ChEBI" id="CHEBI:15378"/>
        <dbReference type="ChEBI" id="CHEBI:57783"/>
        <dbReference type="ChEBI" id="CHEBI:58349"/>
        <dbReference type="ChEBI" id="CHEBI:68483"/>
        <dbReference type="ChEBI" id="CHEBI:70757"/>
        <dbReference type="EC" id="1.3.1.98"/>
    </reaction>
</comment>
<comment type="cofactor">
    <cofactor evidence="1">
        <name>FAD</name>
        <dbReference type="ChEBI" id="CHEBI:57692"/>
    </cofactor>
</comment>
<comment type="pathway">
    <text evidence="1">Cell wall biogenesis; peptidoglycan biosynthesis.</text>
</comment>
<comment type="subcellular location">
    <subcellularLocation>
        <location evidence="1">Cytoplasm</location>
    </subcellularLocation>
</comment>
<comment type="similarity">
    <text evidence="1">Belongs to the MurB family.</text>
</comment>
<proteinExistence type="inferred from homology"/>
<feature type="chain" id="PRO_0000179272" description="UDP-N-acetylenolpyruvoylglucosamine reductase">
    <location>
        <begin position="1"/>
        <end position="295"/>
    </location>
</feature>
<feature type="domain" description="FAD-binding PCMH-type" evidence="1">
    <location>
        <begin position="23"/>
        <end position="188"/>
    </location>
</feature>
<feature type="active site" evidence="1">
    <location>
        <position position="167"/>
    </location>
</feature>
<feature type="active site" description="Proton donor" evidence="1">
    <location>
        <position position="217"/>
    </location>
</feature>
<feature type="active site" evidence="1">
    <location>
        <position position="287"/>
    </location>
</feature>
<reference key="1">
    <citation type="journal article" date="2001" name="Proc. Natl. Acad. Sci. U.S.A.">
        <title>Complete genome sequence of an M1 strain of Streptococcus pyogenes.</title>
        <authorList>
            <person name="Ferretti J.J."/>
            <person name="McShan W.M."/>
            <person name="Ajdic D.J."/>
            <person name="Savic D.J."/>
            <person name="Savic G."/>
            <person name="Lyon K."/>
            <person name="Primeaux C."/>
            <person name="Sezate S."/>
            <person name="Suvorov A.N."/>
            <person name="Kenton S."/>
            <person name="Lai H.S."/>
            <person name="Lin S.P."/>
            <person name="Qian Y."/>
            <person name="Jia H.G."/>
            <person name="Najar F.Z."/>
            <person name="Ren Q."/>
            <person name="Zhu H."/>
            <person name="Song L."/>
            <person name="White J."/>
            <person name="Yuan X."/>
            <person name="Clifton S.W."/>
            <person name="Roe B.A."/>
            <person name="McLaughlin R.E."/>
        </authorList>
    </citation>
    <scope>NUCLEOTIDE SEQUENCE [LARGE SCALE GENOMIC DNA]</scope>
    <source>
        <strain>ATCC 700294 / SF370 / Serotype M1</strain>
    </source>
</reference>
<reference key="2">
    <citation type="journal article" date="2005" name="J. Infect. Dis.">
        <title>Evolutionary origin and emergence of a highly successful clone of serotype M1 group A Streptococcus involved multiple horizontal gene transfer events.</title>
        <authorList>
            <person name="Sumby P."/>
            <person name="Porcella S.F."/>
            <person name="Madrigal A.G."/>
            <person name="Barbian K.D."/>
            <person name="Virtaneva K."/>
            <person name="Ricklefs S.M."/>
            <person name="Sturdevant D.E."/>
            <person name="Graham M.R."/>
            <person name="Vuopio-Varkila J."/>
            <person name="Hoe N.P."/>
            <person name="Musser J.M."/>
        </authorList>
    </citation>
    <scope>NUCLEOTIDE SEQUENCE [LARGE SCALE GENOMIC DNA]</scope>
    <source>
        <strain>ATCC BAA-947 / MGAS5005 / Serotype M1</strain>
    </source>
</reference>
<accession>Q99ZS9</accession>
<accession>Q48YX9</accession>
<sequence length="295" mass="32375">MITELHGIDIRENEPLKHYTYTKVGGPADFLAFPRNHYELSRIVAYANKENMPWLVLGNASNLIVRDGGIRGFVIMFDKLNAVHLNGYTLEAEAGANLIETTKIAKFHSLTGFEFACGIPGSIGGAVFMNAGAYGGEISHIFLSAKVLTPSGEIKTISARDMAFGYRHSAIQETGDIVISAKFALKPGNYDTISQEMNRLNHLRQLKQPLEFPSCGSVFKRPPGHFAGQLIMEANLKGHRIGGVEVSEKHTGFMINVADGTAKDYEDLIAYVIETVENHSGVRLEPEVRIIGENL</sequence>
<protein>
    <recommendedName>
        <fullName evidence="1">UDP-N-acetylenolpyruvoylglucosamine reductase</fullName>
        <ecNumber evidence="1">1.3.1.98</ecNumber>
    </recommendedName>
    <alternativeName>
        <fullName evidence="1">UDP-N-acetylmuramate dehydrogenase</fullName>
    </alternativeName>
</protein>
<gene>
    <name evidence="1" type="primary">murB</name>
    <name type="ordered locus">SPy_1101</name>
    <name type="ordered locus">M5005_Spy0825</name>
</gene>
<name>MURB_STRP1</name>
<evidence type="ECO:0000255" key="1">
    <source>
        <dbReference type="HAMAP-Rule" id="MF_00037"/>
    </source>
</evidence>
<dbReference type="EC" id="1.3.1.98" evidence="1"/>
<dbReference type="EMBL" id="AE004092">
    <property type="protein sequence ID" value="AAK33979.1"/>
    <property type="molecule type" value="Genomic_DNA"/>
</dbReference>
<dbReference type="EMBL" id="CP000017">
    <property type="protein sequence ID" value="AAZ51443.1"/>
    <property type="molecule type" value="Genomic_DNA"/>
</dbReference>
<dbReference type="RefSeq" id="NP_269258.1">
    <property type="nucleotide sequence ID" value="NC_002737.2"/>
</dbReference>
<dbReference type="SMR" id="Q99ZS9"/>
<dbReference type="PaxDb" id="1314-HKU360_00890"/>
<dbReference type="KEGG" id="spy:SPy_1101"/>
<dbReference type="KEGG" id="spz:M5005_Spy0825"/>
<dbReference type="PATRIC" id="fig|160490.10.peg.957"/>
<dbReference type="HOGENOM" id="CLU_035304_1_1_9"/>
<dbReference type="OMA" id="APLTWFR"/>
<dbReference type="UniPathway" id="UPA00219"/>
<dbReference type="Proteomes" id="UP000000750">
    <property type="component" value="Chromosome"/>
</dbReference>
<dbReference type="GO" id="GO:0005829">
    <property type="term" value="C:cytosol"/>
    <property type="evidence" value="ECO:0007669"/>
    <property type="project" value="TreeGrafter"/>
</dbReference>
<dbReference type="GO" id="GO:0071949">
    <property type="term" value="F:FAD binding"/>
    <property type="evidence" value="ECO:0007669"/>
    <property type="project" value="InterPro"/>
</dbReference>
<dbReference type="GO" id="GO:0008762">
    <property type="term" value="F:UDP-N-acetylmuramate dehydrogenase activity"/>
    <property type="evidence" value="ECO:0007669"/>
    <property type="project" value="UniProtKB-UniRule"/>
</dbReference>
<dbReference type="GO" id="GO:0051301">
    <property type="term" value="P:cell division"/>
    <property type="evidence" value="ECO:0007669"/>
    <property type="project" value="UniProtKB-KW"/>
</dbReference>
<dbReference type="GO" id="GO:0071555">
    <property type="term" value="P:cell wall organization"/>
    <property type="evidence" value="ECO:0007669"/>
    <property type="project" value="UniProtKB-KW"/>
</dbReference>
<dbReference type="GO" id="GO:0009252">
    <property type="term" value="P:peptidoglycan biosynthetic process"/>
    <property type="evidence" value="ECO:0007669"/>
    <property type="project" value="UniProtKB-UniRule"/>
</dbReference>
<dbReference type="GO" id="GO:0008360">
    <property type="term" value="P:regulation of cell shape"/>
    <property type="evidence" value="ECO:0007669"/>
    <property type="project" value="UniProtKB-KW"/>
</dbReference>
<dbReference type="Gene3D" id="3.30.465.10">
    <property type="match status" value="1"/>
</dbReference>
<dbReference type="Gene3D" id="3.90.78.10">
    <property type="entry name" value="UDP-N-acetylenolpyruvoylglucosamine reductase, C-terminal domain"/>
    <property type="match status" value="1"/>
</dbReference>
<dbReference type="Gene3D" id="3.30.43.10">
    <property type="entry name" value="Uridine Diphospho-n-acetylenolpyruvylglucosamine Reductase, domain 2"/>
    <property type="match status" value="1"/>
</dbReference>
<dbReference type="HAMAP" id="MF_00037">
    <property type="entry name" value="MurB"/>
    <property type="match status" value="1"/>
</dbReference>
<dbReference type="InterPro" id="IPR016166">
    <property type="entry name" value="FAD-bd_PCMH"/>
</dbReference>
<dbReference type="InterPro" id="IPR036318">
    <property type="entry name" value="FAD-bd_PCMH-like_sf"/>
</dbReference>
<dbReference type="InterPro" id="IPR016167">
    <property type="entry name" value="FAD-bd_PCMH_sub1"/>
</dbReference>
<dbReference type="InterPro" id="IPR016169">
    <property type="entry name" value="FAD-bd_PCMH_sub2"/>
</dbReference>
<dbReference type="InterPro" id="IPR003170">
    <property type="entry name" value="MurB"/>
</dbReference>
<dbReference type="InterPro" id="IPR011601">
    <property type="entry name" value="MurB_C"/>
</dbReference>
<dbReference type="InterPro" id="IPR036635">
    <property type="entry name" value="MurB_C_sf"/>
</dbReference>
<dbReference type="InterPro" id="IPR006094">
    <property type="entry name" value="Oxid_FAD_bind_N"/>
</dbReference>
<dbReference type="NCBIfam" id="TIGR00179">
    <property type="entry name" value="murB"/>
    <property type="match status" value="1"/>
</dbReference>
<dbReference type="NCBIfam" id="NF010480">
    <property type="entry name" value="PRK13905.1"/>
    <property type="match status" value="1"/>
</dbReference>
<dbReference type="PANTHER" id="PTHR21071">
    <property type="entry name" value="UDP-N-ACETYLENOLPYRUVOYLGLUCOSAMINE REDUCTASE"/>
    <property type="match status" value="1"/>
</dbReference>
<dbReference type="PANTHER" id="PTHR21071:SF4">
    <property type="entry name" value="UDP-N-ACETYLENOLPYRUVOYLGLUCOSAMINE REDUCTASE"/>
    <property type="match status" value="1"/>
</dbReference>
<dbReference type="Pfam" id="PF01565">
    <property type="entry name" value="FAD_binding_4"/>
    <property type="match status" value="1"/>
</dbReference>
<dbReference type="Pfam" id="PF02873">
    <property type="entry name" value="MurB_C"/>
    <property type="match status" value="1"/>
</dbReference>
<dbReference type="SUPFAM" id="SSF56176">
    <property type="entry name" value="FAD-binding/transporter-associated domain-like"/>
    <property type="match status" value="1"/>
</dbReference>
<dbReference type="SUPFAM" id="SSF56194">
    <property type="entry name" value="Uridine diphospho-N-Acetylenolpyruvylglucosamine reductase, MurB, C-terminal domain"/>
    <property type="match status" value="1"/>
</dbReference>
<dbReference type="PROSITE" id="PS51387">
    <property type="entry name" value="FAD_PCMH"/>
    <property type="match status" value="1"/>
</dbReference>